<organism>
    <name type="scientific">Arabidopsis thaliana</name>
    <name type="common">Mouse-ear cress</name>
    <dbReference type="NCBI Taxonomy" id="3702"/>
    <lineage>
        <taxon>Eukaryota</taxon>
        <taxon>Viridiplantae</taxon>
        <taxon>Streptophyta</taxon>
        <taxon>Embryophyta</taxon>
        <taxon>Tracheophyta</taxon>
        <taxon>Spermatophyta</taxon>
        <taxon>Magnoliopsida</taxon>
        <taxon>eudicotyledons</taxon>
        <taxon>Gunneridae</taxon>
        <taxon>Pentapetalae</taxon>
        <taxon>rosids</taxon>
        <taxon>malvids</taxon>
        <taxon>Brassicales</taxon>
        <taxon>Brassicaceae</taxon>
        <taxon>Camelineae</taxon>
        <taxon>Arabidopsis</taxon>
    </lineage>
</organism>
<name>RIN13_ARATH</name>
<proteinExistence type="evidence at protein level"/>
<keyword id="KW-0381">Hypersensitive response</keyword>
<keyword id="KW-0539">Nucleus</keyword>
<keyword id="KW-0611">Plant defense</keyword>
<keyword id="KW-1185">Reference proteome</keyword>
<protein>
    <recommendedName>
        <fullName evidence="4">RPM1 interacting protein 13</fullName>
    </recommendedName>
</protein>
<feature type="chain" id="PRO_0000454727" description="RPM1 interacting protein 13">
    <location>
        <begin position="1"/>
        <end position="430"/>
    </location>
</feature>
<feature type="region of interest" description="Disordered" evidence="1">
    <location>
        <begin position="1"/>
        <end position="21"/>
    </location>
</feature>
<feature type="region of interest" description="Nuclear localization" evidence="5">
    <location>
        <begin position="231"/>
        <end position="300"/>
    </location>
</feature>
<dbReference type="EMBL" id="AC006569">
    <property type="protein sequence ID" value="AAD21757.1"/>
    <property type="molecule type" value="Genomic_DNA"/>
</dbReference>
<dbReference type="EMBL" id="CP002685">
    <property type="protein sequence ID" value="AEC06992.1"/>
    <property type="molecule type" value="Genomic_DNA"/>
</dbReference>
<dbReference type="EMBL" id="BT033116">
    <property type="protein sequence ID" value="ACF20471.1"/>
    <property type="molecule type" value="mRNA"/>
</dbReference>
<dbReference type="PIR" id="F84587">
    <property type="entry name" value="F84587"/>
</dbReference>
<dbReference type="RefSeq" id="NP_179621.1">
    <property type="nucleotide sequence ID" value="NM_127590.6"/>
</dbReference>
<dbReference type="FunCoup" id="Q9SK71">
    <property type="interactions" value="732"/>
</dbReference>
<dbReference type="STRING" id="3702.Q9SK71"/>
<dbReference type="GlyGen" id="Q9SK71">
    <property type="glycosylation" value="1 site"/>
</dbReference>
<dbReference type="iPTMnet" id="Q9SK71"/>
<dbReference type="PaxDb" id="3702-AT2G20310.1"/>
<dbReference type="ProteomicsDB" id="183829"/>
<dbReference type="EnsemblPlants" id="AT2G20310.1">
    <property type="protein sequence ID" value="AT2G20310.1"/>
    <property type="gene ID" value="AT2G20310"/>
</dbReference>
<dbReference type="GeneID" id="816550"/>
<dbReference type="Gramene" id="AT2G20310.1">
    <property type="protein sequence ID" value="AT2G20310.1"/>
    <property type="gene ID" value="AT2G20310"/>
</dbReference>
<dbReference type="KEGG" id="ath:AT2G20310"/>
<dbReference type="Araport" id="AT2G20310"/>
<dbReference type="TAIR" id="AT2G20310">
    <property type="gene designation" value="RIN13"/>
</dbReference>
<dbReference type="eggNOG" id="ENOG502QRK3">
    <property type="taxonomic scope" value="Eukaryota"/>
</dbReference>
<dbReference type="HOGENOM" id="CLU_614453_0_0_1"/>
<dbReference type="InParanoid" id="Q9SK71"/>
<dbReference type="OMA" id="CAYWCIA"/>
<dbReference type="OrthoDB" id="266020at2759"/>
<dbReference type="PhylomeDB" id="Q9SK71"/>
<dbReference type="PRO" id="PR:Q9SK71"/>
<dbReference type="Proteomes" id="UP000006548">
    <property type="component" value="Chromosome 2"/>
</dbReference>
<dbReference type="ExpressionAtlas" id="Q9SK71">
    <property type="expression patterns" value="baseline and differential"/>
</dbReference>
<dbReference type="GO" id="GO:0005634">
    <property type="term" value="C:nucleus"/>
    <property type="evidence" value="ECO:0000314"/>
    <property type="project" value="UniProtKB"/>
</dbReference>
<dbReference type="GO" id="GO:0008219">
    <property type="term" value="P:cell death"/>
    <property type="evidence" value="ECO:0000315"/>
    <property type="project" value="UniProtKB"/>
</dbReference>
<dbReference type="GO" id="GO:0042742">
    <property type="term" value="P:defense response to bacterium"/>
    <property type="evidence" value="ECO:0000315"/>
    <property type="project" value="TAIR"/>
</dbReference>
<dbReference type="GO" id="GO:0010150">
    <property type="term" value="P:leaf senescence"/>
    <property type="evidence" value="ECO:0000315"/>
    <property type="project" value="UniProtKB"/>
</dbReference>
<dbReference type="GO" id="GO:0034051">
    <property type="term" value="P:negative regulation of plant-type hypersensitive response"/>
    <property type="evidence" value="ECO:0000315"/>
    <property type="project" value="UniProtKB"/>
</dbReference>
<dbReference type="GO" id="GO:0009626">
    <property type="term" value="P:plant-type hypersensitive response"/>
    <property type="evidence" value="ECO:0000315"/>
    <property type="project" value="TAIR"/>
</dbReference>
<dbReference type="GO" id="GO:1900426">
    <property type="term" value="P:positive regulation of defense response to bacterium"/>
    <property type="evidence" value="ECO:0000315"/>
    <property type="project" value="UniProtKB"/>
</dbReference>
<dbReference type="InterPro" id="IPR053234">
    <property type="entry name" value="RPM1_Interactor"/>
</dbReference>
<dbReference type="PANTHER" id="PTHR33443:SF34">
    <property type="entry name" value="RPM1 INTERACTING PROTEIN 13"/>
    <property type="match status" value="1"/>
</dbReference>
<dbReference type="PANTHER" id="PTHR33443">
    <property type="entry name" value="ZGC:112980"/>
    <property type="match status" value="1"/>
</dbReference>
<sequence length="430" mass="47936">MGSGNHVDIVDVSSGEEDVDTRGDVEYTDWLNGVMEPVDDTSDSTDIVEVLSEVRGGVNSQYRKPNSSNQALEDDDDCVILDCDPDKTRETTSVDDDDDDDVLVVGQKGEIACRDFPHPRHSCAKYAFNSTSHEKYCDMCHCYVCDIRAPCPYWCIAVSSIDHCHANDKEKIWKNQREYFRTGYMPTAPSSKPTPSILRVPKNTLLRKNHVEIRPCSSSTRVANPSSVKARHRIRQPIPHNQGLQSQPAQSLSTVRDSVIQKDRSSYRFSLRSRVASSAGNGISIRFNNAQVSQSSHHSSSTVAPTLNPETYTQQRNVRDHCTALPGSQSNVFTRHADQNIRGSGNRQFQTNVDRFAPSKAPLTAEDSHTATVQQQPGINENVLETKLSEFEKWLMENPNPTGPVSPLPEPGNQDYASTLSFDFETFLND</sequence>
<evidence type="ECO:0000256" key="1">
    <source>
        <dbReference type="SAM" id="MobiDB-lite"/>
    </source>
</evidence>
<evidence type="ECO:0000269" key="2">
    <source>
    </source>
</evidence>
<evidence type="ECO:0000269" key="3">
    <source>
    </source>
</evidence>
<evidence type="ECO:0000303" key="4">
    <source>
    </source>
</evidence>
<evidence type="ECO:0000303" key="5">
    <source>
    </source>
</evidence>
<evidence type="ECO:0000312" key="6">
    <source>
        <dbReference type="Araport" id="AT2G20310"/>
    </source>
</evidence>
<evidence type="ECO:0000312" key="7">
    <source>
        <dbReference type="EMBL" id="AAD21757.1"/>
    </source>
</evidence>
<reference key="1">
    <citation type="journal article" date="1999" name="Nature">
        <title>Sequence and analysis of chromosome 2 of the plant Arabidopsis thaliana.</title>
        <authorList>
            <person name="Lin X."/>
            <person name="Kaul S."/>
            <person name="Rounsley S.D."/>
            <person name="Shea T.P."/>
            <person name="Benito M.-I."/>
            <person name="Town C.D."/>
            <person name="Fujii C.Y."/>
            <person name="Mason T.M."/>
            <person name="Bowman C.L."/>
            <person name="Barnstead M.E."/>
            <person name="Feldblyum T.V."/>
            <person name="Buell C.R."/>
            <person name="Ketchum K.A."/>
            <person name="Lee J.J."/>
            <person name="Ronning C.M."/>
            <person name="Koo H.L."/>
            <person name="Moffat K.S."/>
            <person name="Cronin L.A."/>
            <person name="Shen M."/>
            <person name="Pai G."/>
            <person name="Van Aken S."/>
            <person name="Umayam L."/>
            <person name="Tallon L.J."/>
            <person name="Gill J.E."/>
            <person name="Adams M.D."/>
            <person name="Carrera A.J."/>
            <person name="Creasy T.H."/>
            <person name="Goodman H.M."/>
            <person name="Somerville C.R."/>
            <person name="Copenhaver G.P."/>
            <person name="Preuss D."/>
            <person name="Nierman W.C."/>
            <person name="White O."/>
            <person name="Eisen J.A."/>
            <person name="Salzberg S.L."/>
            <person name="Fraser C.M."/>
            <person name="Venter J.C."/>
        </authorList>
    </citation>
    <scope>NUCLEOTIDE SEQUENCE [LARGE SCALE GENOMIC DNA]</scope>
    <source>
        <strain>cv. Columbia</strain>
    </source>
</reference>
<reference key="2">
    <citation type="journal article" date="2017" name="Plant J.">
        <title>Araport11: a complete reannotation of the Arabidopsis thaliana reference genome.</title>
        <authorList>
            <person name="Cheng C.Y."/>
            <person name="Krishnakumar V."/>
            <person name="Chan A.P."/>
            <person name="Thibaud-Nissen F."/>
            <person name="Schobel S."/>
            <person name="Town C.D."/>
        </authorList>
    </citation>
    <scope>GENOME REANNOTATION</scope>
    <source>
        <strain>cv. Columbia</strain>
    </source>
</reference>
<reference key="3">
    <citation type="submission" date="2008-07" db="EMBL/GenBank/DDBJ databases">
        <title>Arabidopsis ORF clones.</title>
        <authorList>
            <person name="de los Reyes C."/>
            <person name="Quan R."/>
            <person name="Chen H."/>
            <person name="Bautista V."/>
            <person name="Kim C.J."/>
            <person name="Ecker J.R."/>
        </authorList>
    </citation>
    <scope>NUCLEOTIDE SEQUENCE [LARGE SCALE MRNA]</scope>
    <source>
        <strain>cv. Columbia</strain>
    </source>
</reference>
<reference key="4">
    <citation type="journal article" date="2005" name="Plant Cell">
        <title>RIN13 is a positive regulator of the plant disease resistance protein RPM1.</title>
        <authorList>
            <person name="Al-Daoude A."/>
            <person name="de Torres Zabala M."/>
            <person name="Ko J.-H."/>
            <person name="Grant M."/>
        </authorList>
    </citation>
    <scope>FUNCTION</scope>
    <scope>DISRUPTION PHENOTYPE</scope>
    <scope>INTERACTION WITH RPM1</scope>
    <source>
        <strain>cv. Col-5</strain>
        <strain>cv. Columbia</strain>
    </source>
</reference>
<reference key="5">
    <citation type="journal article" date="2020" name="Biochem. Biophys. Res. Commun.">
        <title>The nuclear localized RIN13 induces cell death through interacting with ARF1.</title>
        <authorList>
            <person name="Liu X."/>
            <person name="Liu H."/>
            <person name="Liu W.-C."/>
            <person name="Gao Z."/>
        </authorList>
    </citation>
    <scope>FUNCTION</scope>
    <scope>SUBCELLULAR LOCATION</scope>
    <scope>INTERACTION WITH ARF1</scope>
</reference>
<gene>
    <name evidence="4" type="primary">RIN13</name>
    <name evidence="6" type="ordered locus">At2g20310</name>
    <name evidence="7" type="ORF">F11A3.14</name>
</gene>
<accession>Q9SK71</accession>
<comment type="function">
    <text evidence="2 3">Resistance protein interactor which positively enhances RPM1-mediated resistance to necrotrophic bacterial pathogens Pseudomonas syringae pv. tomato DC3000 harboring type III effector protein AvrRpm1 or AvrB, but prevents the hypersensitive response (HR) controlled by RPM1 (PubMed:15722472). Together with ARF1, promotes leaf senescence and cell death, probably by facilitating the translocation of ARF1 into the nucleus, and activates ROS-related enzymes (e.g. POD, CAT and SOD) (PubMed:32446355).</text>
</comment>
<comment type="subunit">
    <text evidence="2 3">Interacts with RPM1 (via its NB-ARC domain) (PubMed:15722472). Binds to ARF1 in the nucleus (PubMed:32446355).</text>
</comment>
<comment type="subcellular location">
    <subcellularLocation>
        <location evidence="3">Nucleus</location>
    </subcellularLocation>
</comment>
<comment type="disruption phenotype">
    <text evidence="2">Normal hypersensitive response (HR) but impaired ability to suppress bacterial growth upon infection by the necrotrophic bacterial pathogens Pseudomonas syringae pv. tomato DC3000 harboring type III effector protein AvrRpm1 or AvrB.</text>
</comment>